<sequence>MKYDTSDLCDIYHEEVNVVEPLFSNFGGRTSFGGKITTVKCFEDNGLLFDLLEENGLGRVLVVDGGGSVRRALINAELAELALKNEWEGIVVYGAVRQVDDLAELDIGIQAMAAIPVGAADEGVGESDIRVNFGGVTFFSGDHLYADNTGIILSEDPLDIE</sequence>
<reference key="1">
    <citation type="journal article" date="2001" name="Nature">
        <title>Genome sequence of Yersinia pestis, the causative agent of plague.</title>
        <authorList>
            <person name="Parkhill J."/>
            <person name="Wren B.W."/>
            <person name="Thomson N.R."/>
            <person name="Titball R.W."/>
            <person name="Holden M.T.G."/>
            <person name="Prentice M.B."/>
            <person name="Sebaihia M."/>
            <person name="James K.D."/>
            <person name="Churcher C.M."/>
            <person name="Mungall K.L."/>
            <person name="Baker S."/>
            <person name="Basham D."/>
            <person name="Bentley S.D."/>
            <person name="Brooks K."/>
            <person name="Cerdeno-Tarraga A.-M."/>
            <person name="Chillingworth T."/>
            <person name="Cronin A."/>
            <person name="Davies R.M."/>
            <person name="Davis P."/>
            <person name="Dougan G."/>
            <person name="Feltwell T."/>
            <person name="Hamlin N."/>
            <person name="Holroyd S."/>
            <person name="Jagels K."/>
            <person name="Karlyshev A.V."/>
            <person name="Leather S."/>
            <person name="Moule S."/>
            <person name="Oyston P.C.F."/>
            <person name="Quail M.A."/>
            <person name="Rutherford K.M."/>
            <person name="Simmonds M."/>
            <person name="Skelton J."/>
            <person name="Stevens K."/>
            <person name="Whitehead S."/>
            <person name="Barrell B.G."/>
        </authorList>
    </citation>
    <scope>NUCLEOTIDE SEQUENCE [LARGE SCALE GENOMIC DNA]</scope>
    <source>
        <strain>CO-92 / Biovar Orientalis</strain>
    </source>
</reference>
<reference key="2">
    <citation type="journal article" date="2002" name="J. Bacteriol.">
        <title>Genome sequence of Yersinia pestis KIM.</title>
        <authorList>
            <person name="Deng W."/>
            <person name="Burland V."/>
            <person name="Plunkett G. III"/>
            <person name="Boutin A."/>
            <person name="Mayhew G.F."/>
            <person name="Liss P."/>
            <person name="Perna N.T."/>
            <person name="Rose D.J."/>
            <person name="Mau B."/>
            <person name="Zhou S."/>
            <person name="Schwartz D.C."/>
            <person name="Fetherston J.D."/>
            <person name="Lindler L.E."/>
            <person name="Brubaker R.R."/>
            <person name="Plano G.V."/>
            <person name="Straley S.C."/>
            <person name="McDonough K.A."/>
            <person name="Nilles M.L."/>
            <person name="Matson J.S."/>
            <person name="Blattner F.R."/>
            <person name="Perry R.D."/>
        </authorList>
    </citation>
    <scope>NUCLEOTIDE SEQUENCE [LARGE SCALE GENOMIC DNA]</scope>
    <source>
        <strain>KIM10+ / Biovar Mediaevalis</strain>
    </source>
</reference>
<reference key="3">
    <citation type="journal article" date="2004" name="DNA Res.">
        <title>Complete genome sequence of Yersinia pestis strain 91001, an isolate avirulent to humans.</title>
        <authorList>
            <person name="Song Y."/>
            <person name="Tong Z."/>
            <person name="Wang J."/>
            <person name="Wang L."/>
            <person name="Guo Z."/>
            <person name="Han Y."/>
            <person name="Zhang J."/>
            <person name="Pei D."/>
            <person name="Zhou D."/>
            <person name="Qin H."/>
            <person name="Pang X."/>
            <person name="Han Y."/>
            <person name="Zhai J."/>
            <person name="Li M."/>
            <person name="Cui B."/>
            <person name="Qi Z."/>
            <person name="Jin L."/>
            <person name="Dai R."/>
            <person name="Chen F."/>
            <person name="Li S."/>
            <person name="Ye C."/>
            <person name="Du Z."/>
            <person name="Lin W."/>
            <person name="Wang J."/>
            <person name="Yu J."/>
            <person name="Yang H."/>
            <person name="Wang J."/>
            <person name="Huang P."/>
            <person name="Yang R."/>
        </authorList>
    </citation>
    <scope>NUCLEOTIDE SEQUENCE [LARGE SCALE GENOMIC DNA]</scope>
    <source>
        <strain>91001 / Biovar Mediaevalis</strain>
    </source>
</reference>
<comment type="function">
    <text evidence="1">Globally modulates RNA abundance by binding to RNase E (Rne) and regulating its endonucleolytic activity. Can modulate Rne action in a substrate-dependent manner by altering the composition of the degradosome. Modulates RNA-binding and helicase activities of the degradosome.</text>
</comment>
<comment type="subunit">
    <text evidence="1">Homotrimer. Binds to both RNA-binding sites in the C-terminal region of Rne and to RhlB.</text>
</comment>
<comment type="subcellular location">
    <subcellularLocation>
        <location evidence="1">Cytoplasm</location>
    </subcellularLocation>
</comment>
<comment type="similarity">
    <text evidence="1">Belongs to the RraA family.</text>
</comment>
<dbReference type="EMBL" id="AL590842">
    <property type="protein sequence ID" value="CAL18791.1"/>
    <property type="molecule type" value="Genomic_DNA"/>
</dbReference>
<dbReference type="EMBL" id="AE009952">
    <property type="protein sequence ID" value="AAM83884.1"/>
    <property type="molecule type" value="Genomic_DNA"/>
</dbReference>
<dbReference type="EMBL" id="AE017042">
    <property type="protein sequence ID" value="AAS60384.1"/>
    <property type="molecule type" value="Genomic_DNA"/>
</dbReference>
<dbReference type="PIR" id="AF0013">
    <property type="entry name" value="AF0013"/>
</dbReference>
<dbReference type="RefSeq" id="WP_002208945.1">
    <property type="nucleotide sequence ID" value="NZ_WUCM01000087.1"/>
</dbReference>
<dbReference type="RefSeq" id="YP_002345193.1">
    <property type="nucleotide sequence ID" value="NC_003143.1"/>
</dbReference>
<dbReference type="SMR" id="Q8ZJJ7"/>
<dbReference type="IntAct" id="Q8ZJJ7">
    <property type="interactions" value="3"/>
</dbReference>
<dbReference type="STRING" id="214092.YPO0103"/>
<dbReference type="PaxDb" id="214092-YPO0103"/>
<dbReference type="DNASU" id="1145239"/>
<dbReference type="EnsemblBacteria" id="AAS60384">
    <property type="protein sequence ID" value="AAS60384"/>
    <property type="gene ID" value="YP_0105"/>
</dbReference>
<dbReference type="GeneID" id="57974491"/>
<dbReference type="KEGG" id="ype:YPO0103"/>
<dbReference type="KEGG" id="ypk:y0292"/>
<dbReference type="KEGG" id="ypm:YP_0105"/>
<dbReference type="PATRIC" id="fig|214092.21.peg.329"/>
<dbReference type="eggNOG" id="COG0684">
    <property type="taxonomic scope" value="Bacteria"/>
</dbReference>
<dbReference type="HOGENOM" id="CLU_072626_4_0_6"/>
<dbReference type="OMA" id="RSCDTQF"/>
<dbReference type="OrthoDB" id="943692at2"/>
<dbReference type="Proteomes" id="UP000000815">
    <property type="component" value="Chromosome"/>
</dbReference>
<dbReference type="Proteomes" id="UP000001019">
    <property type="component" value="Chromosome"/>
</dbReference>
<dbReference type="Proteomes" id="UP000002490">
    <property type="component" value="Chromosome"/>
</dbReference>
<dbReference type="GO" id="GO:0005829">
    <property type="term" value="C:cytosol"/>
    <property type="evidence" value="ECO:0000318"/>
    <property type="project" value="GO_Central"/>
</dbReference>
<dbReference type="GO" id="GO:0060698">
    <property type="term" value="F:endoribonuclease inhibitor activity"/>
    <property type="evidence" value="ECO:0007669"/>
    <property type="project" value="UniProtKB-UniRule"/>
</dbReference>
<dbReference type="GO" id="GO:0019899">
    <property type="term" value="F:enzyme binding"/>
    <property type="evidence" value="ECO:0007669"/>
    <property type="project" value="UniProtKB-UniRule"/>
</dbReference>
<dbReference type="GO" id="GO:1902369">
    <property type="term" value="P:negative regulation of RNA catabolic process"/>
    <property type="evidence" value="ECO:0000318"/>
    <property type="project" value="GO_Central"/>
</dbReference>
<dbReference type="CDD" id="cd16841">
    <property type="entry name" value="RraA_family"/>
    <property type="match status" value="1"/>
</dbReference>
<dbReference type="Gene3D" id="3.50.30.40">
    <property type="entry name" value="Ribonuclease E inhibitor RraA/RraA-like"/>
    <property type="match status" value="1"/>
</dbReference>
<dbReference type="HAMAP" id="MF_00471">
    <property type="entry name" value="RraA"/>
    <property type="match status" value="1"/>
</dbReference>
<dbReference type="InterPro" id="IPR010203">
    <property type="entry name" value="RraA"/>
</dbReference>
<dbReference type="InterPro" id="IPR005493">
    <property type="entry name" value="RraA/RraA-like"/>
</dbReference>
<dbReference type="InterPro" id="IPR036704">
    <property type="entry name" value="RraA/RraA-like_sf"/>
</dbReference>
<dbReference type="InterPro" id="IPR014339">
    <property type="entry name" value="RraA_gpbac"/>
</dbReference>
<dbReference type="NCBIfam" id="TIGR01935">
    <property type="entry name" value="NOT-MenG"/>
    <property type="match status" value="1"/>
</dbReference>
<dbReference type="NCBIfam" id="NF006875">
    <property type="entry name" value="PRK09372.1"/>
    <property type="match status" value="1"/>
</dbReference>
<dbReference type="NCBIfam" id="TIGR02998">
    <property type="entry name" value="RraA_entero"/>
    <property type="match status" value="1"/>
</dbReference>
<dbReference type="PANTHER" id="PTHR33254">
    <property type="entry name" value="4-HYDROXY-4-METHYL-2-OXOGLUTARATE ALDOLASE 3-RELATED"/>
    <property type="match status" value="1"/>
</dbReference>
<dbReference type="PANTHER" id="PTHR33254:SF29">
    <property type="entry name" value="REGULATOR OF RIBONUCLEASE ACTIVITY A"/>
    <property type="match status" value="1"/>
</dbReference>
<dbReference type="Pfam" id="PF03737">
    <property type="entry name" value="RraA-like"/>
    <property type="match status" value="1"/>
</dbReference>
<dbReference type="SUPFAM" id="SSF89562">
    <property type="entry name" value="RraA-like"/>
    <property type="match status" value="1"/>
</dbReference>
<keyword id="KW-0963">Cytoplasm</keyword>
<keyword id="KW-1185">Reference proteome</keyword>
<proteinExistence type="inferred from homology"/>
<feature type="chain" id="PRO_0000209650" description="Regulator of ribonuclease activity A">
    <location>
        <begin position="1"/>
        <end position="161"/>
    </location>
</feature>
<protein>
    <recommendedName>
        <fullName evidence="1">Regulator of ribonuclease activity A</fullName>
    </recommendedName>
</protein>
<name>RRAA_YERPE</name>
<evidence type="ECO:0000255" key="1">
    <source>
        <dbReference type="HAMAP-Rule" id="MF_00471"/>
    </source>
</evidence>
<gene>
    <name evidence="1" type="primary">rraA</name>
    <name type="synonym">menG</name>
    <name type="ordered locus">YPO0103</name>
    <name type="ordered locus">y0292</name>
    <name type="ordered locus">YP_0105</name>
</gene>
<accession>Q8ZJJ7</accession>
<accession>Q0WKJ5</accession>
<organism>
    <name type="scientific">Yersinia pestis</name>
    <dbReference type="NCBI Taxonomy" id="632"/>
    <lineage>
        <taxon>Bacteria</taxon>
        <taxon>Pseudomonadati</taxon>
        <taxon>Pseudomonadota</taxon>
        <taxon>Gammaproteobacteria</taxon>
        <taxon>Enterobacterales</taxon>
        <taxon>Yersiniaceae</taxon>
        <taxon>Yersinia</taxon>
    </lineage>
</organism>